<evidence type="ECO:0000250" key="1"/>
<evidence type="ECO:0000255" key="2"/>
<evidence type="ECO:0000256" key="3">
    <source>
        <dbReference type="SAM" id="MobiDB-lite"/>
    </source>
</evidence>
<evidence type="ECO:0000305" key="4"/>
<reference key="1">
    <citation type="journal article" date="2005" name="Nature">
        <title>Sequencing of Aspergillus nidulans and comparative analysis with A. fumigatus and A. oryzae.</title>
        <authorList>
            <person name="Galagan J.E."/>
            <person name="Calvo S.E."/>
            <person name="Cuomo C."/>
            <person name="Ma L.-J."/>
            <person name="Wortman J.R."/>
            <person name="Batzoglou S."/>
            <person name="Lee S.-I."/>
            <person name="Bastuerkmen M."/>
            <person name="Spevak C.C."/>
            <person name="Clutterbuck J."/>
            <person name="Kapitonov V."/>
            <person name="Jurka J."/>
            <person name="Scazzocchio C."/>
            <person name="Farman M.L."/>
            <person name="Butler J."/>
            <person name="Purcell S."/>
            <person name="Harris S."/>
            <person name="Braus G.H."/>
            <person name="Draht O."/>
            <person name="Busch S."/>
            <person name="D'Enfert C."/>
            <person name="Bouchier C."/>
            <person name="Goldman G.H."/>
            <person name="Bell-Pedersen D."/>
            <person name="Griffiths-Jones S."/>
            <person name="Doonan J.H."/>
            <person name="Yu J."/>
            <person name="Vienken K."/>
            <person name="Pain A."/>
            <person name="Freitag M."/>
            <person name="Selker E.U."/>
            <person name="Archer D.B."/>
            <person name="Penalva M.A."/>
            <person name="Oakley B.R."/>
            <person name="Momany M."/>
            <person name="Tanaka T."/>
            <person name="Kumagai T."/>
            <person name="Asai K."/>
            <person name="Machida M."/>
            <person name="Nierman W.C."/>
            <person name="Denning D.W."/>
            <person name="Caddick M.X."/>
            <person name="Hynes M."/>
            <person name="Paoletti M."/>
            <person name="Fischer R."/>
            <person name="Miller B.L."/>
            <person name="Dyer P.S."/>
            <person name="Sachs M.S."/>
            <person name="Osmani S.A."/>
            <person name="Birren B.W."/>
        </authorList>
    </citation>
    <scope>NUCLEOTIDE SEQUENCE [LARGE SCALE GENOMIC DNA]</scope>
    <source>
        <strain>FGSC A4 / ATCC 38163 / CBS 112.46 / NRRL 194 / M139</strain>
    </source>
</reference>
<reference key="2">
    <citation type="journal article" date="2009" name="Fungal Genet. Biol.">
        <title>The 2008 update of the Aspergillus nidulans genome annotation: a community effort.</title>
        <authorList>
            <person name="Wortman J.R."/>
            <person name="Gilsenan J.M."/>
            <person name="Joardar V."/>
            <person name="Deegan J."/>
            <person name="Clutterbuck J."/>
            <person name="Andersen M.R."/>
            <person name="Archer D."/>
            <person name="Bencina M."/>
            <person name="Braus G."/>
            <person name="Coutinho P."/>
            <person name="von Dohren H."/>
            <person name="Doonan J."/>
            <person name="Driessen A.J."/>
            <person name="Durek P."/>
            <person name="Espeso E."/>
            <person name="Fekete E."/>
            <person name="Flipphi M."/>
            <person name="Estrada C.G."/>
            <person name="Geysens S."/>
            <person name="Goldman G."/>
            <person name="de Groot P.W."/>
            <person name="Hansen K."/>
            <person name="Harris S.D."/>
            <person name="Heinekamp T."/>
            <person name="Helmstaedt K."/>
            <person name="Henrissat B."/>
            <person name="Hofmann G."/>
            <person name="Homan T."/>
            <person name="Horio T."/>
            <person name="Horiuchi H."/>
            <person name="James S."/>
            <person name="Jones M."/>
            <person name="Karaffa L."/>
            <person name="Karanyi Z."/>
            <person name="Kato M."/>
            <person name="Keller N."/>
            <person name="Kelly D.E."/>
            <person name="Kiel J.A."/>
            <person name="Kim J.M."/>
            <person name="van der Klei I.J."/>
            <person name="Klis F.M."/>
            <person name="Kovalchuk A."/>
            <person name="Krasevec N."/>
            <person name="Kubicek C.P."/>
            <person name="Liu B."/>
            <person name="Maccabe A."/>
            <person name="Meyer V."/>
            <person name="Mirabito P."/>
            <person name="Miskei M."/>
            <person name="Mos M."/>
            <person name="Mullins J."/>
            <person name="Nelson D.R."/>
            <person name="Nielsen J."/>
            <person name="Oakley B.R."/>
            <person name="Osmani S.A."/>
            <person name="Pakula T."/>
            <person name="Paszewski A."/>
            <person name="Paulsen I."/>
            <person name="Pilsyk S."/>
            <person name="Pocsi I."/>
            <person name="Punt P.J."/>
            <person name="Ram A.F."/>
            <person name="Ren Q."/>
            <person name="Robellet X."/>
            <person name="Robson G."/>
            <person name="Seiboth B."/>
            <person name="van Solingen P."/>
            <person name="Specht T."/>
            <person name="Sun J."/>
            <person name="Taheri-Talesh N."/>
            <person name="Takeshita N."/>
            <person name="Ussery D."/>
            <person name="vanKuyk P.A."/>
            <person name="Visser H."/>
            <person name="van de Vondervoort P.J."/>
            <person name="de Vries R.P."/>
            <person name="Walton J."/>
            <person name="Xiang X."/>
            <person name="Xiong Y."/>
            <person name="Zeng A.P."/>
            <person name="Brandt B.W."/>
            <person name="Cornell M.J."/>
            <person name="van den Hondel C.A."/>
            <person name="Visser J."/>
            <person name="Oliver S.G."/>
            <person name="Turner G."/>
        </authorList>
    </citation>
    <scope>GENOME REANNOTATION</scope>
    <source>
        <strain>FGSC A4 / ATCC 38163 / CBS 112.46 / NRRL 194 / M139</strain>
    </source>
</reference>
<sequence>MPFISSAELSSRATPPDLQKRKYGEQSQPSEPKRQKIMGGFLDDDDDDDHDGLEAFNEAQYQSEFEIQEQRVDLPQISQSGSRAEPKRPKIMGGFLDNDDDDDDGLEAFNDAHLESQIDTQEQPVKLTEVSRSQSTLESVVINSVTERSTIVPAYAPPNISPTSVKIKTCNGKALNVPLKKPSARVSYERLIASRSTTAPGRAQKSYYGIDIHSLLNESAKEVKAAEAPKPAPVADVRPSIEAPIGDKRSKKLSTAMWTEKYRARKYTELIGDERTNRSILRWLRGWDPIVYPSLARAKQNKKYNNDEEERPHRKVLLLCGPPGLGKTTLAHVCARQAGYEVLEINASDERSRDVVKGRIRDALGTENVKGMNVELGEQKVRKVGRPVCVVVDEVDGVVSGSGGSGEGGFMKALTDLVLLDQRNSARTSERASDGRKRKGDNFRFLRPLILVCNDVYHASLRPLRQSSVAEIIHVRQAPLENVVSRMKSIFTLEGIPSDSDGVRRLCEASWGLAKRKQRGVRSTGAAEGDIRSVLVAAEWVAHKLRNESSAPLRLTRNWLEQRVLADAGGGSFFKGMNRGGVRDIVDRVFTEGAGFPDVPLGDESLQDPYDRSEAVSVDVANIKKRHAIRRLCEMVDASGDHDRCTSECFSSYPLQPYQDDTFLTKPNAAYDWLHFHDTISSRIYSAHDWELGAYLSQATSAFHLLFATAQGKAQQQYREIDEEEEEAHPFSGPRADYAAFEATKQNQAILSTFQSSFSAPLLRLFRSSNNVATELIPNVIRMLSPDIKPVVVRGSEQKSVASVRKESERALVQSAVRVMTGLGVTFEKVRIENEGGGHGGWAYRMEPPLDALVSFSKVPGFSSATNPVRYAVRQVLDQEYRKESIRKNSENLSSTGSKKSTTKSDDIETPANPAEAAKLKYGTAVKRDFFGRIIQDRVPSPQEDMEQALSRKAKSAQQELSSAGRKVWVTYHDGFSNAVRKPISMAELLSGL</sequence>
<gene>
    <name type="primary">ctf18</name>
    <name type="synonym">chl12</name>
    <name type="ORF">AN6694</name>
</gene>
<proteinExistence type="inferred from homology"/>
<protein>
    <recommendedName>
        <fullName>Chromosome transmission fidelity protein 18</fullName>
    </recommendedName>
</protein>
<accession>P0C1D3</accession>
<accession>C8V1M9</accession>
<accession>Q5AYD6</accession>
<dbReference type="EMBL" id="AACD01000112">
    <property type="protein sequence ID" value="EAA58512.1"/>
    <property type="status" value="ALT_SEQ"/>
    <property type="molecule type" value="Genomic_DNA"/>
</dbReference>
<dbReference type="EMBL" id="BN001301">
    <property type="protein sequence ID" value="CBF71262.1"/>
    <property type="molecule type" value="Genomic_DNA"/>
</dbReference>
<dbReference type="SMR" id="P0C1D3"/>
<dbReference type="FunCoup" id="P0C1D3">
    <property type="interactions" value="858"/>
</dbReference>
<dbReference type="STRING" id="227321.P0C1D3"/>
<dbReference type="EnsemblFungi" id="CBF71262">
    <property type="protein sequence ID" value="CBF71262"/>
    <property type="gene ID" value="ANIA_06694"/>
</dbReference>
<dbReference type="VEuPathDB" id="FungiDB:AN6694"/>
<dbReference type="eggNOG" id="KOG1969">
    <property type="taxonomic scope" value="Eukaryota"/>
</dbReference>
<dbReference type="HOGENOM" id="CLU_004894_0_0_1"/>
<dbReference type="InParanoid" id="P0C1D3"/>
<dbReference type="OMA" id="RWLKGWE"/>
<dbReference type="OrthoDB" id="2195431at2759"/>
<dbReference type="Proteomes" id="UP000000560">
    <property type="component" value="Chromosome I"/>
</dbReference>
<dbReference type="GO" id="GO:0005634">
    <property type="term" value="C:nucleus"/>
    <property type="evidence" value="ECO:0000318"/>
    <property type="project" value="GO_Central"/>
</dbReference>
<dbReference type="GO" id="GO:0005524">
    <property type="term" value="F:ATP binding"/>
    <property type="evidence" value="ECO:0007669"/>
    <property type="project" value="UniProtKB-KW"/>
</dbReference>
<dbReference type="GO" id="GO:0016887">
    <property type="term" value="F:ATP hydrolysis activity"/>
    <property type="evidence" value="ECO:0007669"/>
    <property type="project" value="InterPro"/>
</dbReference>
<dbReference type="GO" id="GO:0003677">
    <property type="term" value="F:DNA binding"/>
    <property type="evidence" value="ECO:0000318"/>
    <property type="project" value="GO_Central"/>
</dbReference>
<dbReference type="GO" id="GO:0006260">
    <property type="term" value="P:DNA replication"/>
    <property type="evidence" value="ECO:0007669"/>
    <property type="project" value="UniProtKB-KW"/>
</dbReference>
<dbReference type="CDD" id="cd00009">
    <property type="entry name" value="AAA"/>
    <property type="match status" value="1"/>
</dbReference>
<dbReference type="Gene3D" id="3.40.50.300">
    <property type="entry name" value="P-loop containing nucleotide triphosphate hydrolases"/>
    <property type="match status" value="1"/>
</dbReference>
<dbReference type="InterPro" id="IPR003593">
    <property type="entry name" value="AAA+_ATPase"/>
</dbReference>
<dbReference type="InterPro" id="IPR003959">
    <property type="entry name" value="ATPase_AAA_core"/>
</dbReference>
<dbReference type="InterPro" id="IPR027417">
    <property type="entry name" value="P-loop_NTPase"/>
</dbReference>
<dbReference type="PANTHER" id="PTHR23389">
    <property type="entry name" value="CHROMOSOME TRANSMISSION FIDELITY FACTOR 18"/>
    <property type="match status" value="1"/>
</dbReference>
<dbReference type="PANTHER" id="PTHR23389:SF3">
    <property type="entry name" value="CHROMOSOME TRANSMISSION FIDELITY PROTEIN 18 HOMOLOG"/>
    <property type="match status" value="1"/>
</dbReference>
<dbReference type="Pfam" id="PF00004">
    <property type="entry name" value="AAA"/>
    <property type="match status" value="1"/>
</dbReference>
<dbReference type="SMART" id="SM00382">
    <property type="entry name" value="AAA"/>
    <property type="match status" value="1"/>
</dbReference>
<dbReference type="SUPFAM" id="SSF52540">
    <property type="entry name" value="P-loop containing nucleoside triphosphate hydrolases"/>
    <property type="match status" value="1"/>
</dbReference>
<name>CTF18_EMENI</name>
<keyword id="KW-0067">ATP-binding</keyword>
<keyword id="KW-0131">Cell cycle</keyword>
<keyword id="KW-0235">DNA replication</keyword>
<keyword id="KW-0238">DNA-binding</keyword>
<keyword id="KW-0547">Nucleotide-binding</keyword>
<keyword id="KW-0539">Nucleus</keyword>
<keyword id="KW-1185">Reference proteome</keyword>
<comment type="function">
    <text evidence="1">Essential for the fidelity of chromosome transmission. Required for the DNA replication block checkpoint. Replication factor C (RFC) complex has an essential but redundant activity in sister chromatid cohesion establishment (By similarity).</text>
</comment>
<comment type="subcellular location">
    <subcellularLocation>
        <location evidence="1">Nucleus</location>
    </subcellularLocation>
</comment>
<comment type="similarity">
    <text evidence="4">Belongs to the activator 1 small subunits family. CTF18 subfamily.</text>
</comment>
<comment type="sequence caution" evidence="4">
    <conflict type="erroneous gene model prediction">
        <sequence resource="EMBL-CDS" id="EAA58512"/>
    </conflict>
    <text>The predicted gene AN6694 has been split into 2 genes: AN6694 and AN11898.</text>
</comment>
<organism>
    <name type="scientific">Emericella nidulans (strain FGSC A4 / ATCC 38163 / CBS 112.46 / NRRL 194 / M139)</name>
    <name type="common">Aspergillus nidulans</name>
    <dbReference type="NCBI Taxonomy" id="227321"/>
    <lineage>
        <taxon>Eukaryota</taxon>
        <taxon>Fungi</taxon>
        <taxon>Dikarya</taxon>
        <taxon>Ascomycota</taxon>
        <taxon>Pezizomycotina</taxon>
        <taxon>Eurotiomycetes</taxon>
        <taxon>Eurotiomycetidae</taxon>
        <taxon>Eurotiales</taxon>
        <taxon>Aspergillaceae</taxon>
        <taxon>Aspergillus</taxon>
        <taxon>Aspergillus subgen. Nidulantes</taxon>
    </lineage>
</organism>
<feature type="chain" id="PRO_0000235294" description="Chromosome transmission fidelity protein 18">
    <location>
        <begin position="1"/>
        <end position="993"/>
    </location>
</feature>
<feature type="region of interest" description="Disordered" evidence="3">
    <location>
        <begin position="1"/>
        <end position="52"/>
    </location>
</feature>
<feature type="region of interest" description="Disordered" evidence="3">
    <location>
        <begin position="65"/>
        <end position="107"/>
    </location>
</feature>
<feature type="region of interest" description="Disordered" evidence="3">
    <location>
        <begin position="887"/>
        <end position="915"/>
    </location>
</feature>
<feature type="compositionally biased region" description="Acidic residues" evidence="3">
    <location>
        <begin position="42"/>
        <end position="51"/>
    </location>
</feature>
<feature type="compositionally biased region" description="Acidic residues" evidence="3">
    <location>
        <begin position="97"/>
        <end position="106"/>
    </location>
</feature>
<feature type="binding site" evidence="2">
    <location>
        <begin position="321"/>
        <end position="328"/>
    </location>
    <ligand>
        <name>ATP</name>
        <dbReference type="ChEBI" id="CHEBI:30616"/>
    </ligand>
</feature>